<keyword id="KW-1185">Reference proteome</keyword>
<keyword id="KW-0687">Ribonucleoprotein</keyword>
<keyword id="KW-0689">Ribosomal protein</keyword>
<accession>A1K9K9</accession>
<reference key="1">
    <citation type="journal article" date="2006" name="Nat. Biotechnol.">
        <title>Complete genome of the mutualistic, N2-fixing grass endophyte Azoarcus sp. strain BH72.</title>
        <authorList>
            <person name="Krause A."/>
            <person name="Ramakumar A."/>
            <person name="Bartels D."/>
            <person name="Battistoni F."/>
            <person name="Bekel T."/>
            <person name="Boch J."/>
            <person name="Boehm M."/>
            <person name="Friedrich F."/>
            <person name="Hurek T."/>
            <person name="Krause L."/>
            <person name="Linke B."/>
            <person name="McHardy A.C."/>
            <person name="Sarkar A."/>
            <person name="Schneiker S."/>
            <person name="Syed A.A."/>
            <person name="Thauer R."/>
            <person name="Vorhoelter F.-J."/>
            <person name="Weidner S."/>
            <person name="Puehler A."/>
            <person name="Reinhold-Hurek B."/>
            <person name="Kaiser O."/>
            <person name="Goesmann A."/>
        </authorList>
    </citation>
    <scope>NUCLEOTIDE SEQUENCE [LARGE SCALE GENOMIC DNA]</scope>
    <source>
        <strain>BH72</strain>
    </source>
</reference>
<dbReference type="EMBL" id="AM406670">
    <property type="protein sequence ID" value="CAL95514.1"/>
    <property type="molecule type" value="Genomic_DNA"/>
</dbReference>
<dbReference type="RefSeq" id="WP_011766624.1">
    <property type="nucleotide sequence ID" value="NC_008702.1"/>
</dbReference>
<dbReference type="SMR" id="A1K9K9"/>
<dbReference type="STRING" id="62928.azo2898"/>
<dbReference type="KEGG" id="aoa:dqs_3038"/>
<dbReference type="KEGG" id="azo:azo2898"/>
<dbReference type="eggNOG" id="COG0228">
    <property type="taxonomic scope" value="Bacteria"/>
</dbReference>
<dbReference type="HOGENOM" id="CLU_100590_5_1_4"/>
<dbReference type="OrthoDB" id="9807878at2"/>
<dbReference type="Proteomes" id="UP000002588">
    <property type="component" value="Chromosome"/>
</dbReference>
<dbReference type="GO" id="GO:0005737">
    <property type="term" value="C:cytoplasm"/>
    <property type="evidence" value="ECO:0007669"/>
    <property type="project" value="UniProtKB-ARBA"/>
</dbReference>
<dbReference type="GO" id="GO:0015935">
    <property type="term" value="C:small ribosomal subunit"/>
    <property type="evidence" value="ECO:0007669"/>
    <property type="project" value="TreeGrafter"/>
</dbReference>
<dbReference type="GO" id="GO:0003735">
    <property type="term" value="F:structural constituent of ribosome"/>
    <property type="evidence" value="ECO:0007669"/>
    <property type="project" value="InterPro"/>
</dbReference>
<dbReference type="GO" id="GO:0006412">
    <property type="term" value="P:translation"/>
    <property type="evidence" value="ECO:0007669"/>
    <property type="project" value="UniProtKB-UniRule"/>
</dbReference>
<dbReference type="Gene3D" id="3.30.1320.10">
    <property type="match status" value="1"/>
</dbReference>
<dbReference type="HAMAP" id="MF_00385">
    <property type="entry name" value="Ribosomal_bS16"/>
    <property type="match status" value="1"/>
</dbReference>
<dbReference type="InterPro" id="IPR000307">
    <property type="entry name" value="Ribosomal_bS16"/>
</dbReference>
<dbReference type="InterPro" id="IPR020592">
    <property type="entry name" value="Ribosomal_bS16_CS"/>
</dbReference>
<dbReference type="InterPro" id="IPR023803">
    <property type="entry name" value="Ribosomal_bS16_dom_sf"/>
</dbReference>
<dbReference type="NCBIfam" id="TIGR00002">
    <property type="entry name" value="S16"/>
    <property type="match status" value="1"/>
</dbReference>
<dbReference type="PANTHER" id="PTHR12919">
    <property type="entry name" value="30S RIBOSOMAL PROTEIN S16"/>
    <property type="match status" value="1"/>
</dbReference>
<dbReference type="PANTHER" id="PTHR12919:SF20">
    <property type="entry name" value="SMALL RIBOSOMAL SUBUNIT PROTEIN BS16M"/>
    <property type="match status" value="1"/>
</dbReference>
<dbReference type="Pfam" id="PF00886">
    <property type="entry name" value="Ribosomal_S16"/>
    <property type="match status" value="1"/>
</dbReference>
<dbReference type="SUPFAM" id="SSF54565">
    <property type="entry name" value="Ribosomal protein S16"/>
    <property type="match status" value="1"/>
</dbReference>
<dbReference type="PROSITE" id="PS00732">
    <property type="entry name" value="RIBOSOMAL_S16"/>
    <property type="match status" value="1"/>
</dbReference>
<gene>
    <name evidence="1" type="primary">rpsP</name>
    <name type="ordered locus">azo2898</name>
</gene>
<feature type="chain" id="PRO_1000049211" description="Small ribosomal subunit protein bS16">
    <location>
        <begin position="1"/>
        <end position="83"/>
    </location>
</feature>
<name>RS16_AZOSB</name>
<sequence length="83" mass="9118">MVVIRLARGGAKKRPFFNIVAADSRNRRDGRFIERVGYYNPVASGAEKGLVVNTERLAYWEQNGAQLSPTVARLVKQAAKAAA</sequence>
<proteinExistence type="inferred from homology"/>
<protein>
    <recommendedName>
        <fullName evidence="1">Small ribosomal subunit protein bS16</fullName>
    </recommendedName>
    <alternativeName>
        <fullName evidence="2">30S ribosomal protein S16</fullName>
    </alternativeName>
</protein>
<comment type="similarity">
    <text evidence="1">Belongs to the bacterial ribosomal protein bS16 family.</text>
</comment>
<evidence type="ECO:0000255" key="1">
    <source>
        <dbReference type="HAMAP-Rule" id="MF_00385"/>
    </source>
</evidence>
<evidence type="ECO:0000305" key="2"/>
<organism>
    <name type="scientific">Azoarcus sp. (strain BH72)</name>
    <dbReference type="NCBI Taxonomy" id="418699"/>
    <lineage>
        <taxon>Bacteria</taxon>
        <taxon>Pseudomonadati</taxon>
        <taxon>Pseudomonadota</taxon>
        <taxon>Betaproteobacteria</taxon>
        <taxon>Rhodocyclales</taxon>
        <taxon>Zoogloeaceae</taxon>
        <taxon>Azoarcus</taxon>
    </lineage>
</organism>